<sequence length="800" mass="89424">MLISNEWLKDYVNVDQSVQALAERITRTGIEVDDIIDYTKDIKKLVVGHVLSKTPHPNADKLNICQVDLGEEEPVQIVCGAPNVDEGQHVIVAKVGGRLPGGVKIKRAKLRGERSEGMICSLQEIGISSHVTPKNYESGIYVFPEAVKPGTDALEALYLNDQVMEFDLTPNRADALSMIGTAYEVAALYQTKMNKPQLTSNESQESAKDELTIEVKNEDKVPYYSARVVHDVTIGPSPVWMQFRLIKAGIRPINNVVDISNYVLLEYGQPLHMFDQEQIGSQSIEVRQAKKDETMRTLDGEERRLLDTDIVITNGKDPIALGGVMGGDFSEVTEQTRHVVVEGAIFDPVSIRHTSRRLNLRSESSSRFEKGIATEFVDEAVDRACYLLETYASATVLKDRISYGDLGSFVTPIKITADKVNRTIGFNLTDEEIIDIFEQLGFKTENKNGDIIVNVPSRRKDISIKEDLIEEVARIYGYDDIPSTLPVFKDVTSGELTDRQFKTRTVKETLEGAGLDQAITYSLVSKNHATDFALQNRSTIELLMPMSEAHSTLRQSLLPHLIDAVSYNVARKNTNVKLYEIGRVFFGNGEGELPDEVEYLSGILTGDFVNNKWQGKKEPVDFYLTKGIVERVAEKLNLQFDFRAGQIDGLHPGRTAIVSLNGKDIGFIGELHPTLAANNDLKRTYVFELNYDAMMEVSVGYINYEPIPRFPGVTRDIALEVNHEVTSSELLSIIHENGEDILNDTLVFDVYEGEHLEKGKKSIAIRLSYLDTENTLTDERVNAVHDKILEALKKHGAIIR</sequence>
<keyword id="KW-0030">Aminoacyl-tRNA synthetase</keyword>
<keyword id="KW-0067">ATP-binding</keyword>
<keyword id="KW-0963">Cytoplasm</keyword>
<keyword id="KW-0436">Ligase</keyword>
<keyword id="KW-0460">Magnesium</keyword>
<keyword id="KW-0479">Metal-binding</keyword>
<keyword id="KW-0547">Nucleotide-binding</keyword>
<keyword id="KW-0648">Protein biosynthesis</keyword>
<keyword id="KW-1185">Reference proteome</keyword>
<keyword id="KW-0694">RNA-binding</keyword>
<keyword id="KW-0820">tRNA-binding</keyword>
<protein>
    <recommendedName>
        <fullName evidence="1">Phenylalanine--tRNA ligase beta subunit</fullName>
        <ecNumber evidence="1">6.1.1.20</ecNumber>
    </recommendedName>
    <alternativeName>
        <fullName evidence="1">Phenylalanyl-tRNA synthetase beta subunit</fullName>
        <shortName evidence="1">PheRS</shortName>
    </alternativeName>
</protein>
<evidence type="ECO:0000255" key="1">
    <source>
        <dbReference type="HAMAP-Rule" id="MF_00283"/>
    </source>
</evidence>
<proteinExistence type="inferred from homology"/>
<name>SYFB_STAEQ</name>
<reference key="1">
    <citation type="journal article" date="2005" name="J. Bacteriol.">
        <title>Insights on evolution of virulence and resistance from the complete genome analysis of an early methicillin-resistant Staphylococcus aureus strain and a biofilm-producing methicillin-resistant Staphylococcus epidermidis strain.</title>
        <authorList>
            <person name="Gill S.R."/>
            <person name="Fouts D.E."/>
            <person name="Archer G.L."/>
            <person name="Mongodin E.F."/>
            <person name="DeBoy R.T."/>
            <person name="Ravel J."/>
            <person name="Paulsen I.T."/>
            <person name="Kolonay J.F."/>
            <person name="Brinkac L.M."/>
            <person name="Beanan M.J."/>
            <person name="Dodson R.J."/>
            <person name="Daugherty S.C."/>
            <person name="Madupu R."/>
            <person name="Angiuoli S.V."/>
            <person name="Durkin A.S."/>
            <person name="Haft D.H."/>
            <person name="Vamathevan J.J."/>
            <person name="Khouri H."/>
            <person name="Utterback T.R."/>
            <person name="Lee C."/>
            <person name="Dimitrov G."/>
            <person name="Jiang L."/>
            <person name="Qin H."/>
            <person name="Weidman J."/>
            <person name="Tran K."/>
            <person name="Kang K.H."/>
            <person name="Hance I.R."/>
            <person name="Nelson K.E."/>
            <person name="Fraser C.M."/>
        </authorList>
    </citation>
    <scope>NUCLEOTIDE SEQUENCE [LARGE SCALE GENOMIC DNA]</scope>
    <source>
        <strain>ATCC 35984 / DSM 28319 / BCRC 17069 / CCUG 31568 / BM 3577 / RP62A</strain>
    </source>
</reference>
<comment type="catalytic activity">
    <reaction evidence="1">
        <text>tRNA(Phe) + L-phenylalanine + ATP = L-phenylalanyl-tRNA(Phe) + AMP + diphosphate + H(+)</text>
        <dbReference type="Rhea" id="RHEA:19413"/>
        <dbReference type="Rhea" id="RHEA-COMP:9668"/>
        <dbReference type="Rhea" id="RHEA-COMP:9699"/>
        <dbReference type="ChEBI" id="CHEBI:15378"/>
        <dbReference type="ChEBI" id="CHEBI:30616"/>
        <dbReference type="ChEBI" id="CHEBI:33019"/>
        <dbReference type="ChEBI" id="CHEBI:58095"/>
        <dbReference type="ChEBI" id="CHEBI:78442"/>
        <dbReference type="ChEBI" id="CHEBI:78531"/>
        <dbReference type="ChEBI" id="CHEBI:456215"/>
        <dbReference type="EC" id="6.1.1.20"/>
    </reaction>
</comment>
<comment type="cofactor">
    <cofactor evidence="1">
        <name>Mg(2+)</name>
        <dbReference type="ChEBI" id="CHEBI:18420"/>
    </cofactor>
    <text evidence="1">Binds 2 magnesium ions per tetramer.</text>
</comment>
<comment type="subunit">
    <text evidence="1">Tetramer of two alpha and two beta subunits.</text>
</comment>
<comment type="subcellular location">
    <subcellularLocation>
        <location>Cytoplasm</location>
    </subcellularLocation>
</comment>
<comment type="similarity">
    <text evidence="1">Belongs to the phenylalanyl-tRNA synthetase beta subunit family. Type 1 subfamily.</text>
</comment>
<gene>
    <name evidence="1" type="primary">pheT</name>
    <name type="ordered locus">SERP0722</name>
</gene>
<organism>
    <name type="scientific">Staphylococcus epidermidis (strain ATCC 35984 / DSM 28319 / BCRC 17069 / CCUG 31568 / BM 3577 / RP62A)</name>
    <dbReference type="NCBI Taxonomy" id="176279"/>
    <lineage>
        <taxon>Bacteria</taxon>
        <taxon>Bacillati</taxon>
        <taxon>Bacillota</taxon>
        <taxon>Bacilli</taxon>
        <taxon>Bacillales</taxon>
        <taxon>Staphylococcaceae</taxon>
        <taxon>Staphylococcus</taxon>
    </lineage>
</organism>
<feature type="chain" id="PRO_0000126956" description="Phenylalanine--tRNA ligase beta subunit">
    <location>
        <begin position="1"/>
        <end position="800"/>
    </location>
</feature>
<feature type="domain" description="tRNA-binding" evidence="1">
    <location>
        <begin position="39"/>
        <end position="154"/>
    </location>
</feature>
<feature type="domain" description="B5" evidence="1">
    <location>
        <begin position="408"/>
        <end position="483"/>
    </location>
</feature>
<feature type="domain" description="FDX-ACB" evidence="1">
    <location>
        <begin position="708"/>
        <end position="800"/>
    </location>
</feature>
<feature type="binding site" evidence="1">
    <location>
        <position position="461"/>
    </location>
    <ligand>
        <name>Mg(2+)</name>
        <dbReference type="ChEBI" id="CHEBI:18420"/>
        <note>shared with alpha subunit</note>
    </ligand>
</feature>
<feature type="binding site" evidence="1">
    <location>
        <position position="467"/>
    </location>
    <ligand>
        <name>Mg(2+)</name>
        <dbReference type="ChEBI" id="CHEBI:18420"/>
        <note>shared with alpha subunit</note>
    </ligand>
</feature>
<feature type="binding site" evidence="1">
    <location>
        <position position="470"/>
    </location>
    <ligand>
        <name>Mg(2+)</name>
        <dbReference type="ChEBI" id="CHEBI:18420"/>
        <note>shared with alpha subunit</note>
    </ligand>
</feature>
<feature type="binding site" evidence="1">
    <location>
        <position position="471"/>
    </location>
    <ligand>
        <name>Mg(2+)</name>
        <dbReference type="ChEBI" id="CHEBI:18420"/>
        <note>shared with alpha subunit</note>
    </ligand>
</feature>
<dbReference type="EC" id="6.1.1.20" evidence="1"/>
<dbReference type="EMBL" id="CP000029">
    <property type="protein sequence ID" value="AAW54088.1"/>
    <property type="molecule type" value="Genomic_DNA"/>
</dbReference>
<dbReference type="RefSeq" id="WP_002446205.1">
    <property type="nucleotide sequence ID" value="NC_002976.3"/>
</dbReference>
<dbReference type="SMR" id="Q5HQ35"/>
<dbReference type="STRING" id="176279.SERP0722"/>
<dbReference type="KEGG" id="ser:SERP0722"/>
<dbReference type="eggNOG" id="COG0072">
    <property type="taxonomic scope" value="Bacteria"/>
</dbReference>
<dbReference type="eggNOG" id="COG0073">
    <property type="taxonomic scope" value="Bacteria"/>
</dbReference>
<dbReference type="HOGENOM" id="CLU_016891_0_0_9"/>
<dbReference type="Proteomes" id="UP000000531">
    <property type="component" value="Chromosome"/>
</dbReference>
<dbReference type="GO" id="GO:0009328">
    <property type="term" value="C:phenylalanine-tRNA ligase complex"/>
    <property type="evidence" value="ECO:0007669"/>
    <property type="project" value="TreeGrafter"/>
</dbReference>
<dbReference type="GO" id="GO:0005524">
    <property type="term" value="F:ATP binding"/>
    <property type="evidence" value="ECO:0007669"/>
    <property type="project" value="UniProtKB-UniRule"/>
</dbReference>
<dbReference type="GO" id="GO:0140096">
    <property type="term" value="F:catalytic activity, acting on a protein"/>
    <property type="evidence" value="ECO:0007669"/>
    <property type="project" value="UniProtKB-ARBA"/>
</dbReference>
<dbReference type="GO" id="GO:0000287">
    <property type="term" value="F:magnesium ion binding"/>
    <property type="evidence" value="ECO:0007669"/>
    <property type="project" value="UniProtKB-UniRule"/>
</dbReference>
<dbReference type="GO" id="GO:0004826">
    <property type="term" value="F:phenylalanine-tRNA ligase activity"/>
    <property type="evidence" value="ECO:0007669"/>
    <property type="project" value="UniProtKB-UniRule"/>
</dbReference>
<dbReference type="GO" id="GO:0016740">
    <property type="term" value="F:transferase activity"/>
    <property type="evidence" value="ECO:0007669"/>
    <property type="project" value="UniProtKB-ARBA"/>
</dbReference>
<dbReference type="GO" id="GO:0000049">
    <property type="term" value="F:tRNA binding"/>
    <property type="evidence" value="ECO:0007669"/>
    <property type="project" value="UniProtKB-KW"/>
</dbReference>
<dbReference type="GO" id="GO:0006432">
    <property type="term" value="P:phenylalanyl-tRNA aminoacylation"/>
    <property type="evidence" value="ECO:0007669"/>
    <property type="project" value="UniProtKB-UniRule"/>
</dbReference>
<dbReference type="CDD" id="cd00769">
    <property type="entry name" value="PheRS_beta_core"/>
    <property type="match status" value="1"/>
</dbReference>
<dbReference type="CDD" id="cd02796">
    <property type="entry name" value="tRNA_bind_bactPheRS"/>
    <property type="match status" value="1"/>
</dbReference>
<dbReference type="FunFam" id="2.40.50.140:FF:000045">
    <property type="entry name" value="Phenylalanine--tRNA ligase beta subunit"/>
    <property type="match status" value="1"/>
</dbReference>
<dbReference type="FunFam" id="3.30.56.10:FF:000002">
    <property type="entry name" value="Phenylalanine--tRNA ligase beta subunit"/>
    <property type="match status" value="1"/>
</dbReference>
<dbReference type="FunFam" id="3.30.70.380:FF:000001">
    <property type="entry name" value="Phenylalanine--tRNA ligase beta subunit"/>
    <property type="match status" value="1"/>
</dbReference>
<dbReference type="FunFam" id="3.30.930.10:FF:000022">
    <property type="entry name" value="Phenylalanine--tRNA ligase beta subunit"/>
    <property type="match status" value="1"/>
</dbReference>
<dbReference type="FunFam" id="3.50.40.10:FF:000001">
    <property type="entry name" value="Phenylalanine--tRNA ligase beta subunit"/>
    <property type="match status" value="1"/>
</dbReference>
<dbReference type="Gene3D" id="3.30.56.10">
    <property type="match status" value="2"/>
</dbReference>
<dbReference type="Gene3D" id="3.30.930.10">
    <property type="entry name" value="Bira Bifunctional Protein, Domain 2"/>
    <property type="match status" value="1"/>
</dbReference>
<dbReference type="Gene3D" id="3.30.70.380">
    <property type="entry name" value="Ferrodoxin-fold anticodon-binding domain"/>
    <property type="match status" value="1"/>
</dbReference>
<dbReference type="Gene3D" id="2.40.50.140">
    <property type="entry name" value="Nucleic acid-binding proteins"/>
    <property type="match status" value="1"/>
</dbReference>
<dbReference type="Gene3D" id="3.50.40.10">
    <property type="entry name" value="Phenylalanyl-trna Synthetase, Chain B, domain 3"/>
    <property type="match status" value="1"/>
</dbReference>
<dbReference type="HAMAP" id="MF_00283">
    <property type="entry name" value="Phe_tRNA_synth_beta1"/>
    <property type="match status" value="1"/>
</dbReference>
<dbReference type="InterPro" id="IPR045864">
    <property type="entry name" value="aa-tRNA-synth_II/BPL/LPL"/>
</dbReference>
<dbReference type="InterPro" id="IPR005146">
    <property type="entry name" value="B3/B4_tRNA-bd"/>
</dbReference>
<dbReference type="InterPro" id="IPR009061">
    <property type="entry name" value="DNA-bd_dom_put_sf"/>
</dbReference>
<dbReference type="InterPro" id="IPR005121">
    <property type="entry name" value="Fdx_antiC-bd"/>
</dbReference>
<dbReference type="InterPro" id="IPR036690">
    <property type="entry name" value="Fdx_antiC-bd_sf"/>
</dbReference>
<dbReference type="InterPro" id="IPR012340">
    <property type="entry name" value="NA-bd_OB-fold"/>
</dbReference>
<dbReference type="InterPro" id="IPR045060">
    <property type="entry name" value="Phe-tRNA-ligase_IIc_bsu"/>
</dbReference>
<dbReference type="InterPro" id="IPR004532">
    <property type="entry name" value="Phe-tRNA-ligase_IIc_bsu_bact"/>
</dbReference>
<dbReference type="InterPro" id="IPR020825">
    <property type="entry name" value="Phe-tRNA_synthase-like_B3/B4"/>
</dbReference>
<dbReference type="InterPro" id="IPR041616">
    <property type="entry name" value="PheRS_beta_core"/>
</dbReference>
<dbReference type="InterPro" id="IPR002547">
    <property type="entry name" value="tRNA-bd_dom"/>
</dbReference>
<dbReference type="InterPro" id="IPR033714">
    <property type="entry name" value="tRNA_bind_bactPheRS"/>
</dbReference>
<dbReference type="InterPro" id="IPR005147">
    <property type="entry name" value="tRNA_synthase_B5-dom"/>
</dbReference>
<dbReference type="NCBIfam" id="TIGR00472">
    <property type="entry name" value="pheT_bact"/>
    <property type="match status" value="1"/>
</dbReference>
<dbReference type="NCBIfam" id="NF045760">
    <property type="entry name" value="YtpR"/>
    <property type="match status" value="1"/>
</dbReference>
<dbReference type="PANTHER" id="PTHR10947:SF0">
    <property type="entry name" value="PHENYLALANINE--TRNA LIGASE BETA SUBUNIT"/>
    <property type="match status" value="1"/>
</dbReference>
<dbReference type="PANTHER" id="PTHR10947">
    <property type="entry name" value="PHENYLALANYL-TRNA SYNTHETASE BETA CHAIN AND LEUCINE-RICH REPEAT-CONTAINING PROTEIN 47"/>
    <property type="match status" value="1"/>
</dbReference>
<dbReference type="Pfam" id="PF03483">
    <property type="entry name" value="B3_4"/>
    <property type="match status" value="1"/>
</dbReference>
<dbReference type="Pfam" id="PF03484">
    <property type="entry name" value="B5"/>
    <property type="match status" value="1"/>
</dbReference>
<dbReference type="Pfam" id="PF03147">
    <property type="entry name" value="FDX-ACB"/>
    <property type="match status" value="1"/>
</dbReference>
<dbReference type="Pfam" id="PF01588">
    <property type="entry name" value="tRNA_bind"/>
    <property type="match status" value="1"/>
</dbReference>
<dbReference type="Pfam" id="PF17759">
    <property type="entry name" value="tRNA_synthFbeta"/>
    <property type="match status" value="1"/>
</dbReference>
<dbReference type="SMART" id="SM00873">
    <property type="entry name" value="B3_4"/>
    <property type="match status" value="1"/>
</dbReference>
<dbReference type="SMART" id="SM00874">
    <property type="entry name" value="B5"/>
    <property type="match status" value="1"/>
</dbReference>
<dbReference type="SMART" id="SM00896">
    <property type="entry name" value="FDX-ACB"/>
    <property type="match status" value="1"/>
</dbReference>
<dbReference type="SUPFAM" id="SSF54991">
    <property type="entry name" value="Anticodon-binding domain of PheRS"/>
    <property type="match status" value="1"/>
</dbReference>
<dbReference type="SUPFAM" id="SSF55681">
    <property type="entry name" value="Class II aaRS and biotin synthetases"/>
    <property type="match status" value="1"/>
</dbReference>
<dbReference type="SUPFAM" id="SSF50249">
    <property type="entry name" value="Nucleic acid-binding proteins"/>
    <property type="match status" value="1"/>
</dbReference>
<dbReference type="SUPFAM" id="SSF56037">
    <property type="entry name" value="PheT/TilS domain"/>
    <property type="match status" value="1"/>
</dbReference>
<dbReference type="SUPFAM" id="SSF46955">
    <property type="entry name" value="Putative DNA-binding domain"/>
    <property type="match status" value="1"/>
</dbReference>
<dbReference type="PROSITE" id="PS51483">
    <property type="entry name" value="B5"/>
    <property type="match status" value="1"/>
</dbReference>
<dbReference type="PROSITE" id="PS51447">
    <property type="entry name" value="FDX_ACB"/>
    <property type="match status" value="1"/>
</dbReference>
<dbReference type="PROSITE" id="PS50886">
    <property type="entry name" value="TRBD"/>
    <property type="match status" value="1"/>
</dbReference>
<accession>Q5HQ35</accession>